<organism>
    <name type="scientific">Vibrio cholerae serotype O1 (strain ATCC 39315 / El Tor Inaba N16961)</name>
    <dbReference type="NCBI Taxonomy" id="243277"/>
    <lineage>
        <taxon>Bacteria</taxon>
        <taxon>Pseudomonadati</taxon>
        <taxon>Pseudomonadota</taxon>
        <taxon>Gammaproteobacteria</taxon>
        <taxon>Vibrionales</taxon>
        <taxon>Vibrionaceae</taxon>
        <taxon>Vibrio</taxon>
    </lineage>
</organism>
<reference key="1">
    <citation type="journal article" date="2000" name="Nature">
        <title>DNA sequence of both chromosomes of the cholera pathogen Vibrio cholerae.</title>
        <authorList>
            <person name="Heidelberg J.F."/>
            <person name="Eisen J.A."/>
            <person name="Nelson W.C."/>
            <person name="Clayton R.A."/>
            <person name="Gwinn M.L."/>
            <person name="Dodson R.J."/>
            <person name="Haft D.H."/>
            <person name="Hickey E.K."/>
            <person name="Peterson J.D."/>
            <person name="Umayam L.A."/>
            <person name="Gill S.R."/>
            <person name="Nelson K.E."/>
            <person name="Read T.D."/>
            <person name="Tettelin H."/>
            <person name="Richardson D.L."/>
            <person name="Ermolaeva M.D."/>
            <person name="Vamathevan J.J."/>
            <person name="Bass S."/>
            <person name="Qin H."/>
            <person name="Dragoi I."/>
            <person name="Sellers P."/>
            <person name="McDonald L.A."/>
            <person name="Utterback T.R."/>
            <person name="Fleischmann R.D."/>
            <person name="Nierman W.C."/>
            <person name="White O."/>
            <person name="Salzberg S.L."/>
            <person name="Smith H.O."/>
            <person name="Colwell R.R."/>
            <person name="Mekalanos J.J."/>
            <person name="Venter J.C."/>
            <person name="Fraser C.M."/>
        </authorList>
    </citation>
    <scope>NUCLEOTIDE SEQUENCE [LARGE SCALE GENOMIC DNA]</scope>
    <source>
        <strain>ATCC 39315 / El Tor Inaba N16961</strain>
    </source>
</reference>
<protein>
    <recommendedName>
        <fullName evidence="1">Ribose-phosphate pyrophosphokinase</fullName>
        <shortName evidence="1">RPPK</shortName>
        <ecNumber evidence="1">2.7.6.1</ecNumber>
    </recommendedName>
    <alternativeName>
        <fullName evidence="1">5-phospho-D-ribosyl alpha-1-diphosphate synthase</fullName>
    </alternativeName>
    <alternativeName>
        <fullName evidence="1">Phosphoribosyl diphosphate synthase</fullName>
    </alternativeName>
    <alternativeName>
        <fullName evidence="1">Phosphoribosyl pyrophosphate synthase</fullName>
        <shortName evidence="1">P-Rib-PP synthase</shortName>
        <shortName evidence="1">PRPP synthase</shortName>
        <shortName evidence="1">PRPPase</shortName>
    </alternativeName>
</protein>
<proteinExistence type="inferred from homology"/>
<name>KPRS_VIBCH</name>
<comment type="function">
    <text evidence="1">Involved in the biosynthesis of the central metabolite phospho-alpha-D-ribosyl-1-pyrophosphate (PRPP) via the transfer of pyrophosphoryl group from ATP to 1-hydroxyl of ribose-5-phosphate (Rib-5-P).</text>
</comment>
<comment type="catalytic activity">
    <reaction evidence="1">
        <text>D-ribose 5-phosphate + ATP = 5-phospho-alpha-D-ribose 1-diphosphate + AMP + H(+)</text>
        <dbReference type="Rhea" id="RHEA:15609"/>
        <dbReference type="ChEBI" id="CHEBI:15378"/>
        <dbReference type="ChEBI" id="CHEBI:30616"/>
        <dbReference type="ChEBI" id="CHEBI:58017"/>
        <dbReference type="ChEBI" id="CHEBI:78346"/>
        <dbReference type="ChEBI" id="CHEBI:456215"/>
        <dbReference type="EC" id="2.7.6.1"/>
    </reaction>
</comment>
<comment type="cofactor">
    <cofactor evidence="1">
        <name>Mg(2+)</name>
        <dbReference type="ChEBI" id="CHEBI:18420"/>
    </cofactor>
    <text evidence="1">Binds 2 Mg(2+) ions per subunit.</text>
</comment>
<comment type="pathway">
    <text evidence="1">Metabolic intermediate biosynthesis; 5-phospho-alpha-D-ribose 1-diphosphate biosynthesis; 5-phospho-alpha-D-ribose 1-diphosphate from D-ribose 5-phosphate (route I): step 1/1.</text>
</comment>
<comment type="subunit">
    <text evidence="1">Homohexamer.</text>
</comment>
<comment type="subcellular location">
    <subcellularLocation>
        <location evidence="1">Cytoplasm</location>
    </subcellularLocation>
</comment>
<comment type="similarity">
    <text evidence="1">Belongs to the ribose-phosphate pyrophosphokinase family. Class I subfamily.</text>
</comment>
<sequence>MPDMKLFAGNAIPELAQRIADRLYISLGDATVSRFSDGEVAVQINENVRGSDVFIIQSTCAPTNDNLMELVVMIDAMRRASAGRITAVIPYFGYARQDRRVRSARVPITAKVVADFLSNVGVDRVLTIDLHAEQIQGFFDVPVDNIFGTPVLLEDMKARNLEDPVVVSPDLGGVVRARATAKALGDIDIAIVDKRRPRANVSEVMNLIGDVEGRDCVIVDDMIDTGGTLCKAAEALKERGAKRVFAYATHAVFSGNAAKNIKNSVLDQVIVTDSITLSKEMAATGKVTQLTLSSMLAEAIRRISNEESISAMFN</sequence>
<gene>
    <name evidence="1" type="primary">prs</name>
    <name type="ordered locus">VC_2183</name>
</gene>
<evidence type="ECO:0000255" key="1">
    <source>
        <dbReference type="HAMAP-Rule" id="MF_00583"/>
    </source>
</evidence>
<accession>Q9KQ22</accession>
<feature type="chain" id="PRO_0000141222" description="Ribose-phosphate pyrophosphokinase">
    <location>
        <begin position="1"/>
        <end position="314"/>
    </location>
</feature>
<feature type="active site" evidence="1">
    <location>
        <position position="194"/>
    </location>
</feature>
<feature type="binding site" evidence="1">
    <location>
        <begin position="37"/>
        <end position="39"/>
    </location>
    <ligand>
        <name>ATP</name>
        <dbReference type="ChEBI" id="CHEBI:30616"/>
    </ligand>
</feature>
<feature type="binding site" evidence="1">
    <location>
        <begin position="96"/>
        <end position="97"/>
    </location>
    <ligand>
        <name>ATP</name>
        <dbReference type="ChEBI" id="CHEBI:30616"/>
    </ligand>
</feature>
<feature type="binding site" evidence="1">
    <location>
        <position position="131"/>
    </location>
    <ligand>
        <name>Mg(2+)</name>
        <dbReference type="ChEBI" id="CHEBI:18420"/>
        <label>1</label>
    </ligand>
</feature>
<feature type="binding site" evidence="1">
    <location>
        <position position="170"/>
    </location>
    <ligand>
        <name>Mg(2+)</name>
        <dbReference type="ChEBI" id="CHEBI:18420"/>
        <label>2</label>
    </ligand>
</feature>
<feature type="binding site" evidence="1">
    <location>
        <position position="196"/>
    </location>
    <ligand>
        <name>D-ribose 5-phosphate</name>
        <dbReference type="ChEBI" id="CHEBI:78346"/>
    </ligand>
</feature>
<feature type="binding site" evidence="1">
    <location>
        <position position="220"/>
    </location>
    <ligand>
        <name>D-ribose 5-phosphate</name>
        <dbReference type="ChEBI" id="CHEBI:78346"/>
    </ligand>
</feature>
<feature type="binding site" evidence="1">
    <location>
        <begin position="224"/>
        <end position="228"/>
    </location>
    <ligand>
        <name>D-ribose 5-phosphate</name>
        <dbReference type="ChEBI" id="CHEBI:78346"/>
    </ligand>
</feature>
<keyword id="KW-0067">ATP-binding</keyword>
<keyword id="KW-0963">Cytoplasm</keyword>
<keyword id="KW-0418">Kinase</keyword>
<keyword id="KW-0460">Magnesium</keyword>
<keyword id="KW-0479">Metal-binding</keyword>
<keyword id="KW-0545">Nucleotide biosynthesis</keyword>
<keyword id="KW-0547">Nucleotide-binding</keyword>
<keyword id="KW-1185">Reference proteome</keyword>
<keyword id="KW-0808">Transferase</keyword>
<dbReference type="EC" id="2.7.6.1" evidence="1"/>
<dbReference type="EMBL" id="AE003852">
    <property type="protein sequence ID" value="AAF95328.1"/>
    <property type="molecule type" value="Genomic_DNA"/>
</dbReference>
<dbReference type="PIR" id="F82109">
    <property type="entry name" value="F82109"/>
</dbReference>
<dbReference type="RefSeq" id="NP_231814.1">
    <property type="nucleotide sequence ID" value="NC_002505.1"/>
</dbReference>
<dbReference type="RefSeq" id="WP_001113134.1">
    <property type="nucleotide sequence ID" value="NZ_LT906614.1"/>
</dbReference>
<dbReference type="SMR" id="Q9KQ22"/>
<dbReference type="STRING" id="243277.VC_2183"/>
<dbReference type="DNASU" id="2613319"/>
<dbReference type="EnsemblBacteria" id="AAF95328">
    <property type="protein sequence ID" value="AAF95328"/>
    <property type="gene ID" value="VC_2183"/>
</dbReference>
<dbReference type="KEGG" id="vch:VC_2183"/>
<dbReference type="PATRIC" id="fig|243277.26.peg.2081"/>
<dbReference type="eggNOG" id="COG0462">
    <property type="taxonomic scope" value="Bacteria"/>
</dbReference>
<dbReference type="HOGENOM" id="CLU_033546_2_0_6"/>
<dbReference type="UniPathway" id="UPA00087">
    <property type="reaction ID" value="UER00172"/>
</dbReference>
<dbReference type="Proteomes" id="UP000000584">
    <property type="component" value="Chromosome 1"/>
</dbReference>
<dbReference type="GO" id="GO:0005737">
    <property type="term" value="C:cytoplasm"/>
    <property type="evidence" value="ECO:0000318"/>
    <property type="project" value="GO_Central"/>
</dbReference>
<dbReference type="GO" id="GO:0002189">
    <property type="term" value="C:ribose phosphate diphosphokinase complex"/>
    <property type="evidence" value="ECO:0000318"/>
    <property type="project" value="GO_Central"/>
</dbReference>
<dbReference type="GO" id="GO:0005524">
    <property type="term" value="F:ATP binding"/>
    <property type="evidence" value="ECO:0007669"/>
    <property type="project" value="UniProtKB-KW"/>
</dbReference>
<dbReference type="GO" id="GO:0016301">
    <property type="term" value="F:kinase activity"/>
    <property type="evidence" value="ECO:0007669"/>
    <property type="project" value="UniProtKB-KW"/>
</dbReference>
<dbReference type="GO" id="GO:0000287">
    <property type="term" value="F:magnesium ion binding"/>
    <property type="evidence" value="ECO:0007669"/>
    <property type="project" value="UniProtKB-UniRule"/>
</dbReference>
<dbReference type="GO" id="GO:0004749">
    <property type="term" value="F:ribose phosphate diphosphokinase activity"/>
    <property type="evidence" value="ECO:0000318"/>
    <property type="project" value="GO_Central"/>
</dbReference>
<dbReference type="GO" id="GO:0006015">
    <property type="term" value="P:5-phosphoribose 1-diphosphate biosynthetic process"/>
    <property type="evidence" value="ECO:0000318"/>
    <property type="project" value="GO_Central"/>
</dbReference>
<dbReference type="GO" id="GO:0006164">
    <property type="term" value="P:purine nucleotide biosynthetic process"/>
    <property type="evidence" value="ECO:0000318"/>
    <property type="project" value="GO_Central"/>
</dbReference>
<dbReference type="GO" id="GO:0009156">
    <property type="term" value="P:ribonucleoside monophosphate biosynthetic process"/>
    <property type="evidence" value="ECO:0007669"/>
    <property type="project" value="InterPro"/>
</dbReference>
<dbReference type="CDD" id="cd06223">
    <property type="entry name" value="PRTases_typeI"/>
    <property type="match status" value="1"/>
</dbReference>
<dbReference type="FunFam" id="3.40.50.2020:FF:000001">
    <property type="entry name" value="Ribose-phosphate pyrophosphokinase"/>
    <property type="match status" value="1"/>
</dbReference>
<dbReference type="Gene3D" id="3.40.50.2020">
    <property type="match status" value="2"/>
</dbReference>
<dbReference type="HAMAP" id="MF_00583_B">
    <property type="entry name" value="RibP_PPkinase_B"/>
    <property type="match status" value="1"/>
</dbReference>
<dbReference type="InterPro" id="IPR000842">
    <property type="entry name" value="PRib_PP_synth_CS"/>
</dbReference>
<dbReference type="InterPro" id="IPR029099">
    <property type="entry name" value="Pribosyltran_N"/>
</dbReference>
<dbReference type="InterPro" id="IPR000836">
    <property type="entry name" value="PRibTrfase_dom"/>
</dbReference>
<dbReference type="InterPro" id="IPR029057">
    <property type="entry name" value="PRTase-like"/>
</dbReference>
<dbReference type="InterPro" id="IPR005946">
    <property type="entry name" value="Rib-P_diPkinase"/>
</dbReference>
<dbReference type="InterPro" id="IPR037515">
    <property type="entry name" value="Rib-P_diPkinase_bac"/>
</dbReference>
<dbReference type="NCBIfam" id="NF002320">
    <property type="entry name" value="PRK01259.1"/>
    <property type="match status" value="1"/>
</dbReference>
<dbReference type="NCBIfam" id="TIGR01251">
    <property type="entry name" value="ribP_PPkin"/>
    <property type="match status" value="1"/>
</dbReference>
<dbReference type="PANTHER" id="PTHR10210">
    <property type="entry name" value="RIBOSE-PHOSPHATE DIPHOSPHOKINASE FAMILY MEMBER"/>
    <property type="match status" value="1"/>
</dbReference>
<dbReference type="PANTHER" id="PTHR10210:SF41">
    <property type="entry name" value="RIBOSE-PHOSPHATE PYROPHOSPHOKINASE 1, CHLOROPLASTIC"/>
    <property type="match status" value="1"/>
</dbReference>
<dbReference type="Pfam" id="PF14572">
    <property type="entry name" value="Pribosyl_synth"/>
    <property type="match status" value="1"/>
</dbReference>
<dbReference type="Pfam" id="PF13793">
    <property type="entry name" value="Pribosyltran_N"/>
    <property type="match status" value="1"/>
</dbReference>
<dbReference type="SMART" id="SM01400">
    <property type="entry name" value="Pribosyltran_N"/>
    <property type="match status" value="1"/>
</dbReference>
<dbReference type="SUPFAM" id="SSF53271">
    <property type="entry name" value="PRTase-like"/>
    <property type="match status" value="1"/>
</dbReference>
<dbReference type="PROSITE" id="PS00114">
    <property type="entry name" value="PRPP_SYNTHASE"/>
    <property type="match status" value="1"/>
</dbReference>